<gene>
    <name evidence="1" type="primary">purQ</name>
    <name type="ordered locus">Jann_2543</name>
</gene>
<protein>
    <recommendedName>
        <fullName evidence="1">Phosphoribosylformylglycinamidine synthase subunit PurQ</fullName>
        <shortName evidence="1">FGAM synthase</shortName>
        <ecNumber evidence="1">6.3.5.3</ecNumber>
    </recommendedName>
    <alternativeName>
        <fullName evidence="1">Formylglycinamide ribonucleotide amidotransferase subunit I</fullName>
        <shortName evidence="1">FGAR amidotransferase I</shortName>
        <shortName evidence="1">FGAR-AT I</shortName>
    </alternativeName>
    <alternativeName>
        <fullName evidence="1">Glutaminase PurQ</fullName>
        <ecNumber evidence="1">3.5.1.2</ecNumber>
    </alternativeName>
    <alternativeName>
        <fullName evidence="1">Phosphoribosylformylglycinamidine synthase subunit I</fullName>
    </alternativeName>
</protein>
<keyword id="KW-0067">ATP-binding</keyword>
<keyword id="KW-0963">Cytoplasm</keyword>
<keyword id="KW-0315">Glutamine amidotransferase</keyword>
<keyword id="KW-0378">Hydrolase</keyword>
<keyword id="KW-0436">Ligase</keyword>
<keyword id="KW-0547">Nucleotide-binding</keyword>
<keyword id="KW-0658">Purine biosynthesis</keyword>
<keyword id="KW-1185">Reference proteome</keyword>
<comment type="function">
    <text evidence="1">Part of the phosphoribosylformylglycinamidine synthase complex involved in the purines biosynthetic pathway. Catalyzes the ATP-dependent conversion of formylglycinamide ribonucleotide (FGAR) and glutamine to yield formylglycinamidine ribonucleotide (FGAM) and glutamate. The FGAM synthase complex is composed of three subunits. PurQ produces an ammonia molecule by converting glutamine to glutamate. PurL transfers the ammonia molecule to FGAR to form FGAM in an ATP-dependent manner. PurS interacts with PurQ and PurL and is thought to assist in the transfer of the ammonia molecule from PurQ to PurL.</text>
</comment>
<comment type="catalytic activity">
    <reaction evidence="1">
        <text>N(2)-formyl-N(1)-(5-phospho-beta-D-ribosyl)glycinamide + L-glutamine + ATP + H2O = 2-formamido-N(1)-(5-O-phospho-beta-D-ribosyl)acetamidine + L-glutamate + ADP + phosphate + H(+)</text>
        <dbReference type="Rhea" id="RHEA:17129"/>
        <dbReference type="ChEBI" id="CHEBI:15377"/>
        <dbReference type="ChEBI" id="CHEBI:15378"/>
        <dbReference type="ChEBI" id="CHEBI:29985"/>
        <dbReference type="ChEBI" id="CHEBI:30616"/>
        <dbReference type="ChEBI" id="CHEBI:43474"/>
        <dbReference type="ChEBI" id="CHEBI:58359"/>
        <dbReference type="ChEBI" id="CHEBI:147286"/>
        <dbReference type="ChEBI" id="CHEBI:147287"/>
        <dbReference type="ChEBI" id="CHEBI:456216"/>
        <dbReference type="EC" id="6.3.5.3"/>
    </reaction>
</comment>
<comment type="catalytic activity">
    <reaction evidence="1">
        <text>L-glutamine + H2O = L-glutamate + NH4(+)</text>
        <dbReference type="Rhea" id="RHEA:15889"/>
        <dbReference type="ChEBI" id="CHEBI:15377"/>
        <dbReference type="ChEBI" id="CHEBI:28938"/>
        <dbReference type="ChEBI" id="CHEBI:29985"/>
        <dbReference type="ChEBI" id="CHEBI:58359"/>
        <dbReference type="EC" id="3.5.1.2"/>
    </reaction>
</comment>
<comment type="pathway">
    <text evidence="1">Purine metabolism; IMP biosynthesis via de novo pathway; 5-amino-1-(5-phospho-D-ribosyl)imidazole from N(2)-formyl-N(1)-(5-phospho-D-ribosyl)glycinamide: step 1/2.</text>
</comment>
<comment type="subunit">
    <text evidence="1">Part of the FGAM synthase complex composed of 1 PurL, 1 PurQ and 2 PurS subunits.</text>
</comment>
<comment type="subcellular location">
    <subcellularLocation>
        <location evidence="1">Cytoplasm</location>
    </subcellularLocation>
</comment>
<sequence>MKAAVLVFPGSNCDRDLAVGFRSAGFEVEMVWHKETALPAGIDVVGIPGGFSYGDYLRCGAIAAQSPIMRAVADFAGQGGHVLGVCNGFQVLCETRLLPGVLMRNGGIKFVCRAEPLVVASATSPFTDGYSIGDRIAVPVAHHDGNYQIDDEGLSALRSEDRIAFTYADNPNGSRADIAGVLSANRRVLGMMPHPERAVDVAHGGTDGSVLFASLAAALVAA</sequence>
<reference key="1">
    <citation type="submission" date="2006-02" db="EMBL/GenBank/DDBJ databases">
        <title>Complete sequence of chromosome of Jannaschia sp. CCS1.</title>
        <authorList>
            <consortium name="US DOE Joint Genome Institute"/>
            <person name="Copeland A."/>
            <person name="Lucas S."/>
            <person name="Lapidus A."/>
            <person name="Barry K."/>
            <person name="Detter J.C."/>
            <person name="Glavina del Rio T."/>
            <person name="Hammon N."/>
            <person name="Israni S."/>
            <person name="Pitluck S."/>
            <person name="Brettin T."/>
            <person name="Bruce D."/>
            <person name="Han C."/>
            <person name="Tapia R."/>
            <person name="Gilna P."/>
            <person name="Chertkov O."/>
            <person name="Saunders E."/>
            <person name="Schmutz J."/>
            <person name="Larimer F."/>
            <person name="Land M."/>
            <person name="Kyrpides N."/>
            <person name="Lykidis A."/>
            <person name="Moran M.A."/>
            <person name="Belas R."/>
            <person name="Ye W."/>
            <person name="Buchan A."/>
            <person name="Gonzalez J.M."/>
            <person name="Schell M.A."/>
            <person name="Richardson P."/>
        </authorList>
    </citation>
    <scope>NUCLEOTIDE SEQUENCE [LARGE SCALE GENOMIC DNA]</scope>
    <source>
        <strain>CCS1</strain>
    </source>
</reference>
<organism>
    <name type="scientific">Jannaschia sp. (strain CCS1)</name>
    <dbReference type="NCBI Taxonomy" id="290400"/>
    <lineage>
        <taxon>Bacteria</taxon>
        <taxon>Pseudomonadati</taxon>
        <taxon>Pseudomonadota</taxon>
        <taxon>Alphaproteobacteria</taxon>
        <taxon>Rhodobacterales</taxon>
        <taxon>Roseobacteraceae</taxon>
        <taxon>Jannaschia</taxon>
    </lineage>
</organism>
<dbReference type="EC" id="6.3.5.3" evidence="1"/>
<dbReference type="EC" id="3.5.1.2" evidence="1"/>
<dbReference type="EMBL" id="CP000264">
    <property type="protein sequence ID" value="ABD55460.1"/>
    <property type="molecule type" value="Genomic_DNA"/>
</dbReference>
<dbReference type="RefSeq" id="WP_011455664.1">
    <property type="nucleotide sequence ID" value="NC_007802.1"/>
</dbReference>
<dbReference type="SMR" id="Q28PA2"/>
<dbReference type="STRING" id="290400.Jann_2543"/>
<dbReference type="KEGG" id="jan:Jann_2543"/>
<dbReference type="eggNOG" id="COG0047">
    <property type="taxonomic scope" value="Bacteria"/>
</dbReference>
<dbReference type="HOGENOM" id="CLU_001031_3_1_5"/>
<dbReference type="OrthoDB" id="9804441at2"/>
<dbReference type="UniPathway" id="UPA00074">
    <property type="reaction ID" value="UER00128"/>
</dbReference>
<dbReference type="Proteomes" id="UP000008326">
    <property type="component" value="Chromosome"/>
</dbReference>
<dbReference type="GO" id="GO:0005737">
    <property type="term" value="C:cytoplasm"/>
    <property type="evidence" value="ECO:0007669"/>
    <property type="project" value="UniProtKB-SubCell"/>
</dbReference>
<dbReference type="GO" id="GO:0005524">
    <property type="term" value="F:ATP binding"/>
    <property type="evidence" value="ECO:0007669"/>
    <property type="project" value="UniProtKB-KW"/>
</dbReference>
<dbReference type="GO" id="GO:0004359">
    <property type="term" value="F:glutaminase activity"/>
    <property type="evidence" value="ECO:0007669"/>
    <property type="project" value="UniProtKB-EC"/>
</dbReference>
<dbReference type="GO" id="GO:0004642">
    <property type="term" value="F:phosphoribosylformylglycinamidine synthase activity"/>
    <property type="evidence" value="ECO:0007669"/>
    <property type="project" value="UniProtKB-UniRule"/>
</dbReference>
<dbReference type="GO" id="GO:0006189">
    <property type="term" value="P:'de novo' IMP biosynthetic process"/>
    <property type="evidence" value="ECO:0007669"/>
    <property type="project" value="UniProtKB-UniRule"/>
</dbReference>
<dbReference type="CDD" id="cd01740">
    <property type="entry name" value="GATase1_FGAR_AT"/>
    <property type="match status" value="1"/>
</dbReference>
<dbReference type="Gene3D" id="3.40.50.880">
    <property type="match status" value="1"/>
</dbReference>
<dbReference type="HAMAP" id="MF_00421">
    <property type="entry name" value="PurQ"/>
    <property type="match status" value="1"/>
</dbReference>
<dbReference type="InterPro" id="IPR029062">
    <property type="entry name" value="Class_I_gatase-like"/>
</dbReference>
<dbReference type="InterPro" id="IPR010075">
    <property type="entry name" value="PRibForGlyAmidine_synth_PurQ"/>
</dbReference>
<dbReference type="NCBIfam" id="TIGR01737">
    <property type="entry name" value="FGAM_synth_I"/>
    <property type="match status" value="1"/>
</dbReference>
<dbReference type="NCBIfam" id="NF002957">
    <property type="entry name" value="PRK03619.1"/>
    <property type="match status" value="1"/>
</dbReference>
<dbReference type="PANTHER" id="PTHR47552">
    <property type="entry name" value="PHOSPHORIBOSYLFORMYLGLYCINAMIDINE SYNTHASE SUBUNIT PURQ"/>
    <property type="match status" value="1"/>
</dbReference>
<dbReference type="PANTHER" id="PTHR47552:SF1">
    <property type="entry name" value="PHOSPHORIBOSYLFORMYLGLYCINAMIDINE SYNTHASE SUBUNIT PURQ"/>
    <property type="match status" value="1"/>
</dbReference>
<dbReference type="Pfam" id="PF13507">
    <property type="entry name" value="GATase_5"/>
    <property type="match status" value="1"/>
</dbReference>
<dbReference type="PIRSF" id="PIRSF001586">
    <property type="entry name" value="FGAM_synth_I"/>
    <property type="match status" value="1"/>
</dbReference>
<dbReference type="SMART" id="SM01211">
    <property type="entry name" value="GATase_5"/>
    <property type="match status" value="1"/>
</dbReference>
<dbReference type="SUPFAM" id="SSF52317">
    <property type="entry name" value="Class I glutamine amidotransferase-like"/>
    <property type="match status" value="1"/>
</dbReference>
<dbReference type="PROSITE" id="PS51273">
    <property type="entry name" value="GATASE_TYPE_1"/>
    <property type="match status" value="1"/>
</dbReference>
<proteinExistence type="inferred from homology"/>
<name>PURQ_JANSC</name>
<evidence type="ECO:0000255" key="1">
    <source>
        <dbReference type="HAMAP-Rule" id="MF_00421"/>
    </source>
</evidence>
<feature type="chain" id="PRO_0000252707" description="Phosphoribosylformylglycinamidine synthase subunit PurQ">
    <location>
        <begin position="1"/>
        <end position="222"/>
    </location>
</feature>
<feature type="domain" description="Glutamine amidotransferase type-1" evidence="1">
    <location>
        <begin position="3"/>
        <end position="222"/>
    </location>
</feature>
<feature type="active site" description="Nucleophile" evidence="1">
    <location>
        <position position="86"/>
    </location>
</feature>
<feature type="active site" evidence="1">
    <location>
        <position position="194"/>
    </location>
</feature>
<feature type="active site" evidence="1">
    <location>
        <position position="196"/>
    </location>
</feature>
<accession>Q28PA2</accession>